<comment type="function">
    <text>May remobilize phosphate, particularly when cells senesce or when phosphate becomes limiting.</text>
</comment>
<comment type="catalytic activity">
    <reaction evidence="5 6">
        <text>a ribonucleotidyl-ribonucleotide-RNA + H2O = a 3'-end 3'-phospho-ribonucleotide-RNA + a 5'-end dephospho-ribonucleoside-RNA + H(+)</text>
        <dbReference type="Rhea" id="RHEA:68052"/>
        <dbReference type="Rhea" id="RHEA-COMP:10463"/>
        <dbReference type="Rhea" id="RHEA-COMP:13936"/>
        <dbReference type="Rhea" id="RHEA-COMP:17355"/>
        <dbReference type="ChEBI" id="CHEBI:15377"/>
        <dbReference type="ChEBI" id="CHEBI:15378"/>
        <dbReference type="ChEBI" id="CHEBI:83062"/>
        <dbReference type="ChEBI" id="CHEBI:138284"/>
        <dbReference type="ChEBI" id="CHEBI:173118"/>
        <dbReference type="EC" id="4.6.1.19"/>
    </reaction>
</comment>
<comment type="similarity">
    <text evidence="7">Belongs to the RNase T2 family.</text>
</comment>
<keyword id="KW-1015">Disulfide bond</keyword>
<keyword id="KW-0255">Endonuclease</keyword>
<keyword id="KW-0378">Hydrolase</keyword>
<keyword id="KW-0456">Lyase</keyword>
<keyword id="KW-0540">Nuclease</keyword>
<keyword id="KW-1185">Reference proteome</keyword>
<keyword id="KW-0732">Signal</keyword>
<sequence length="222" mass="25626">MKFFIFILALQQLYVQSFAQDFDFFYFVLQWPGAYCDSRHSCCYPQTGKPAADFGIHGLWPNYKTGGWPQNCNPDSRFDDLRVSDLMSDLQREWPTLSCPSNDGMKFWTHEWEKHGTCAESELDQHDYFEAGLKLKQKANLLHALTNAGIKPDDKFYEMKDIENTIKQVVGFAPGIECNKDSSHNSQLYQIYLCVDTSASKFINCPVMPHGRCDSRVQFPKF</sequence>
<feature type="signal peptide" evidence="4">
    <location>
        <begin position="1"/>
        <end position="19"/>
    </location>
</feature>
<feature type="chain" id="PRO_0000030968" description="Ribonuclease 3">
    <location>
        <begin position="20"/>
        <end position="222"/>
    </location>
</feature>
<feature type="active site" description="Proton donor" evidence="3 5">
    <location>
        <position position="57"/>
    </location>
</feature>
<feature type="active site" evidence="1">
    <location>
        <position position="111"/>
    </location>
</feature>
<feature type="active site" description="Proton acceptor" evidence="3 5">
    <location>
        <position position="115"/>
    </location>
</feature>
<feature type="binding site" evidence="2">
    <location>
        <position position="30"/>
    </location>
    <ligand>
        <name>RNA</name>
        <dbReference type="ChEBI" id="CHEBI:33697"/>
    </ligand>
    <ligandPart>
        <name>a 3'-terminal ribonucleotide 3'-phosphate residue</name>
        <dbReference type="ChEBI" id="CHEBI:83062"/>
    </ligandPart>
</feature>
<feature type="binding site" evidence="2">
    <location>
        <position position="57"/>
    </location>
    <ligand>
        <name>RNA</name>
        <dbReference type="ChEBI" id="CHEBI:33697"/>
    </ligand>
    <ligandPart>
        <name>a 3'-terminal ribonucleotide 3'-phosphate residue</name>
        <dbReference type="ChEBI" id="CHEBI:83062"/>
    </ligandPart>
</feature>
<feature type="binding site" evidence="2">
    <location>
        <position position="107"/>
    </location>
    <ligand>
        <name>RNA</name>
        <dbReference type="ChEBI" id="CHEBI:33697"/>
    </ligand>
    <ligandPart>
        <name>a 3'-terminal ribonucleotide 3'-phosphate residue</name>
        <dbReference type="ChEBI" id="CHEBI:83062"/>
    </ligandPart>
</feature>
<feature type="binding site" evidence="2">
    <location>
        <begin position="110"/>
        <end position="111"/>
    </location>
    <ligand>
        <name>RNA</name>
        <dbReference type="ChEBI" id="CHEBI:33697"/>
    </ligand>
    <ligandPart>
        <name>a 3'-terminal ribonucleotide 3'-phosphate residue</name>
        <dbReference type="ChEBI" id="CHEBI:83062"/>
    </ligandPart>
</feature>
<feature type="binding site" evidence="2">
    <location>
        <begin position="114"/>
        <end position="115"/>
    </location>
    <ligand>
        <name>RNA</name>
        <dbReference type="ChEBI" id="CHEBI:33697"/>
    </ligand>
    <ligandPart>
        <name>a 3'-terminal ribonucleotide 3'-phosphate residue</name>
        <dbReference type="ChEBI" id="CHEBI:83062"/>
    </ligandPart>
</feature>
<feature type="disulfide bond" evidence="3">
    <location>
        <begin position="36"/>
        <end position="42"/>
    </location>
</feature>
<feature type="disulfide bond" evidence="1">
    <location>
        <begin position="72"/>
        <end position="118"/>
    </location>
</feature>
<feature type="disulfide bond" evidence="1">
    <location>
        <begin position="178"/>
        <end position="213"/>
    </location>
</feature>
<feature type="disulfide bond" evidence="2">
    <location>
        <begin position="194"/>
        <end position="205"/>
    </location>
</feature>
<proteinExistence type="evidence at transcript level"/>
<accession>P42815</accession>
<reference key="1">
    <citation type="journal article" date="1994" name="Plant J.">
        <title>The Arabidopsis ribonuclease gene RNS1 is tightly controlled in response to phosphate limitation.</title>
        <authorList>
            <person name="Bariola P.A."/>
            <person name="Howard C.J."/>
            <person name="Taylor C.B."/>
            <person name="Verburg M.T."/>
            <person name="Jaglan V.D."/>
            <person name="Green P.J."/>
        </authorList>
    </citation>
    <scope>NUCLEOTIDE SEQUENCE [MRNA]</scope>
    <source>
        <strain>cv. Columbia</strain>
    </source>
</reference>
<reference key="2">
    <citation type="journal article" date="2000" name="Nature">
        <title>Sequence and analysis of chromosome 1 of the plant Arabidopsis thaliana.</title>
        <authorList>
            <person name="Theologis A."/>
            <person name="Ecker J.R."/>
            <person name="Palm C.J."/>
            <person name="Federspiel N.A."/>
            <person name="Kaul S."/>
            <person name="White O."/>
            <person name="Alonso J."/>
            <person name="Altafi H."/>
            <person name="Araujo R."/>
            <person name="Bowman C.L."/>
            <person name="Brooks S.Y."/>
            <person name="Buehler E."/>
            <person name="Chan A."/>
            <person name="Chao Q."/>
            <person name="Chen H."/>
            <person name="Cheuk R.F."/>
            <person name="Chin C.W."/>
            <person name="Chung M.K."/>
            <person name="Conn L."/>
            <person name="Conway A.B."/>
            <person name="Conway A.R."/>
            <person name="Creasy T.H."/>
            <person name="Dewar K."/>
            <person name="Dunn P."/>
            <person name="Etgu P."/>
            <person name="Feldblyum T.V."/>
            <person name="Feng J.-D."/>
            <person name="Fong B."/>
            <person name="Fujii C.Y."/>
            <person name="Gill J.E."/>
            <person name="Goldsmith A.D."/>
            <person name="Haas B."/>
            <person name="Hansen N.F."/>
            <person name="Hughes B."/>
            <person name="Huizar L."/>
            <person name="Hunter J.L."/>
            <person name="Jenkins J."/>
            <person name="Johnson-Hopson C."/>
            <person name="Khan S."/>
            <person name="Khaykin E."/>
            <person name="Kim C.J."/>
            <person name="Koo H.L."/>
            <person name="Kremenetskaia I."/>
            <person name="Kurtz D.B."/>
            <person name="Kwan A."/>
            <person name="Lam B."/>
            <person name="Langin-Hooper S."/>
            <person name="Lee A."/>
            <person name="Lee J.M."/>
            <person name="Lenz C.A."/>
            <person name="Li J.H."/>
            <person name="Li Y.-P."/>
            <person name="Lin X."/>
            <person name="Liu S.X."/>
            <person name="Liu Z.A."/>
            <person name="Luros J.S."/>
            <person name="Maiti R."/>
            <person name="Marziali A."/>
            <person name="Militscher J."/>
            <person name="Miranda M."/>
            <person name="Nguyen M."/>
            <person name="Nierman W.C."/>
            <person name="Osborne B.I."/>
            <person name="Pai G."/>
            <person name="Peterson J."/>
            <person name="Pham P.K."/>
            <person name="Rizzo M."/>
            <person name="Rooney T."/>
            <person name="Rowley D."/>
            <person name="Sakano H."/>
            <person name="Salzberg S.L."/>
            <person name="Schwartz J.R."/>
            <person name="Shinn P."/>
            <person name="Southwick A.M."/>
            <person name="Sun H."/>
            <person name="Tallon L.J."/>
            <person name="Tambunga G."/>
            <person name="Toriumi M.J."/>
            <person name="Town C.D."/>
            <person name="Utterback T."/>
            <person name="Van Aken S."/>
            <person name="Vaysberg M."/>
            <person name="Vysotskaia V.S."/>
            <person name="Walker M."/>
            <person name="Wu D."/>
            <person name="Yu G."/>
            <person name="Fraser C.M."/>
            <person name="Venter J.C."/>
            <person name="Davis R.W."/>
        </authorList>
    </citation>
    <scope>NUCLEOTIDE SEQUENCE [LARGE SCALE GENOMIC DNA]</scope>
    <source>
        <strain>cv. Columbia</strain>
    </source>
</reference>
<reference key="3">
    <citation type="journal article" date="2017" name="Plant J.">
        <title>Araport11: a complete reannotation of the Arabidopsis thaliana reference genome.</title>
        <authorList>
            <person name="Cheng C.Y."/>
            <person name="Krishnakumar V."/>
            <person name="Chan A.P."/>
            <person name="Thibaud-Nissen F."/>
            <person name="Schobel S."/>
            <person name="Town C.D."/>
        </authorList>
    </citation>
    <scope>GENOME REANNOTATION</scope>
    <source>
        <strain>cv. Columbia</strain>
    </source>
</reference>
<reference key="4">
    <citation type="journal article" date="2003" name="Science">
        <title>Empirical analysis of transcriptional activity in the Arabidopsis genome.</title>
        <authorList>
            <person name="Yamada K."/>
            <person name="Lim J."/>
            <person name="Dale J.M."/>
            <person name="Chen H."/>
            <person name="Shinn P."/>
            <person name="Palm C.J."/>
            <person name="Southwick A.M."/>
            <person name="Wu H.C."/>
            <person name="Kim C.J."/>
            <person name="Nguyen M."/>
            <person name="Pham P.K."/>
            <person name="Cheuk R.F."/>
            <person name="Karlin-Newmann G."/>
            <person name="Liu S.X."/>
            <person name="Lam B."/>
            <person name="Sakano H."/>
            <person name="Wu T."/>
            <person name="Yu G."/>
            <person name="Miranda M."/>
            <person name="Quach H.L."/>
            <person name="Tripp M."/>
            <person name="Chang C.H."/>
            <person name="Lee J.M."/>
            <person name="Toriumi M.J."/>
            <person name="Chan M.M."/>
            <person name="Tang C.C."/>
            <person name="Onodera C.S."/>
            <person name="Deng J.M."/>
            <person name="Akiyama K."/>
            <person name="Ansari Y."/>
            <person name="Arakawa T."/>
            <person name="Banh J."/>
            <person name="Banno F."/>
            <person name="Bowser L."/>
            <person name="Brooks S.Y."/>
            <person name="Carninci P."/>
            <person name="Chao Q."/>
            <person name="Choy N."/>
            <person name="Enju A."/>
            <person name="Goldsmith A.D."/>
            <person name="Gurjal M."/>
            <person name="Hansen N.F."/>
            <person name="Hayashizaki Y."/>
            <person name="Johnson-Hopson C."/>
            <person name="Hsuan V.W."/>
            <person name="Iida K."/>
            <person name="Karnes M."/>
            <person name="Khan S."/>
            <person name="Koesema E."/>
            <person name="Ishida J."/>
            <person name="Jiang P.X."/>
            <person name="Jones T."/>
            <person name="Kawai J."/>
            <person name="Kamiya A."/>
            <person name="Meyers C."/>
            <person name="Nakajima M."/>
            <person name="Narusaka M."/>
            <person name="Seki M."/>
            <person name="Sakurai T."/>
            <person name="Satou M."/>
            <person name="Tamse R."/>
            <person name="Vaysberg M."/>
            <person name="Wallender E.K."/>
            <person name="Wong C."/>
            <person name="Yamamura Y."/>
            <person name="Yuan S."/>
            <person name="Shinozaki K."/>
            <person name="Davis R.W."/>
            <person name="Theologis A."/>
            <person name="Ecker J.R."/>
        </authorList>
    </citation>
    <scope>NUCLEOTIDE SEQUENCE [LARGE SCALE MRNA]</scope>
    <source>
        <strain>cv. Columbia</strain>
    </source>
</reference>
<reference key="5">
    <citation type="submission" date="2002-03" db="EMBL/GenBank/DDBJ databases">
        <title>Full-length cDNA from Arabidopsis thaliana.</title>
        <authorList>
            <person name="Brover V.V."/>
            <person name="Troukhan M.E."/>
            <person name="Alexandrov N.A."/>
            <person name="Lu Y.-P."/>
            <person name="Flavell R.B."/>
            <person name="Feldmann K.A."/>
        </authorList>
    </citation>
    <scope>NUCLEOTIDE SEQUENCE [LARGE SCALE MRNA]</scope>
</reference>
<protein>
    <recommendedName>
        <fullName>Ribonuclease 3</fullName>
        <ecNumber evidence="6">4.6.1.19</ecNumber>
    </recommendedName>
</protein>
<organism>
    <name type="scientific">Arabidopsis thaliana</name>
    <name type="common">Mouse-ear cress</name>
    <dbReference type="NCBI Taxonomy" id="3702"/>
    <lineage>
        <taxon>Eukaryota</taxon>
        <taxon>Viridiplantae</taxon>
        <taxon>Streptophyta</taxon>
        <taxon>Embryophyta</taxon>
        <taxon>Tracheophyta</taxon>
        <taxon>Spermatophyta</taxon>
        <taxon>Magnoliopsida</taxon>
        <taxon>eudicotyledons</taxon>
        <taxon>Gunneridae</taxon>
        <taxon>Pentapetalae</taxon>
        <taxon>rosids</taxon>
        <taxon>malvids</taxon>
        <taxon>Brassicales</taxon>
        <taxon>Brassicaceae</taxon>
        <taxon>Camelineae</taxon>
        <taxon>Arabidopsis</taxon>
    </lineage>
</organism>
<evidence type="ECO:0000250" key="1">
    <source>
        <dbReference type="UniProtKB" id="P08056"/>
    </source>
</evidence>
<evidence type="ECO:0000250" key="2">
    <source>
        <dbReference type="UniProtKB" id="P23540"/>
    </source>
</evidence>
<evidence type="ECO:0000250" key="3">
    <source>
        <dbReference type="UniProtKB" id="Q7SID5"/>
    </source>
</evidence>
<evidence type="ECO:0000255" key="4"/>
<evidence type="ECO:0000255" key="5">
    <source>
        <dbReference type="PROSITE-ProRule" id="PRU10045"/>
    </source>
</evidence>
<evidence type="ECO:0000255" key="6">
    <source>
        <dbReference type="PROSITE-ProRule" id="PRU10046"/>
    </source>
</evidence>
<evidence type="ECO:0000305" key="7"/>
<gene>
    <name type="primary">RNS3</name>
    <name type="ordered locus">At1g26820</name>
    <name type="ORF">T24P13.23</name>
    <name type="ORF">T2P11.1</name>
</gene>
<dbReference type="EC" id="4.6.1.19" evidence="6"/>
<dbReference type="EMBL" id="U05207">
    <property type="protein sequence ID" value="AAC48926.1"/>
    <property type="molecule type" value="mRNA"/>
</dbReference>
<dbReference type="EMBL" id="AC005508">
    <property type="protein sequence ID" value="AAD14489.1"/>
    <property type="molecule type" value="Genomic_DNA"/>
</dbReference>
<dbReference type="EMBL" id="AC006535">
    <property type="protein sequence ID" value="AAF87036.1"/>
    <property type="molecule type" value="Genomic_DNA"/>
</dbReference>
<dbReference type="EMBL" id="CP002684">
    <property type="protein sequence ID" value="AEE30746.1"/>
    <property type="molecule type" value="Genomic_DNA"/>
</dbReference>
<dbReference type="EMBL" id="AY063844">
    <property type="protein sequence ID" value="AAL36200.1"/>
    <property type="molecule type" value="mRNA"/>
</dbReference>
<dbReference type="EMBL" id="AY117288">
    <property type="protein sequence ID" value="AAM51363.1"/>
    <property type="molecule type" value="mRNA"/>
</dbReference>
<dbReference type="EMBL" id="AY088821">
    <property type="protein sequence ID" value="AAM67130.1"/>
    <property type="molecule type" value="mRNA"/>
</dbReference>
<dbReference type="PIR" id="H86394">
    <property type="entry name" value="H86394"/>
</dbReference>
<dbReference type="RefSeq" id="NP_564264.1">
    <property type="nucleotide sequence ID" value="NM_102446.3"/>
</dbReference>
<dbReference type="SMR" id="P42815"/>
<dbReference type="FunCoup" id="P42815">
    <property type="interactions" value="1431"/>
</dbReference>
<dbReference type="STRING" id="3702.P42815"/>
<dbReference type="PaxDb" id="3702-AT1G26820.1"/>
<dbReference type="ProteomicsDB" id="227974"/>
<dbReference type="EnsemblPlants" id="AT1G26820.1">
    <property type="protein sequence ID" value="AT1G26820.1"/>
    <property type="gene ID" value="AT1G26820"/>
</dbReference>
<dbReference type="GeneID" id="839225"/>
<dbReference type="Gramene" id="AT1G26820.1">
    <property type="protein sequence ID" value="AT1G26820.1"/>
    <property type="gene ID" value="AT1G26820"/>
</dbReference>
<dbReference type="KEGG" id="ath:AT1G26820"/>
<dbReference type="Araport" id="AT1G26820"/>
<dbReference type="TAIR" id="AT1G26820">
    <property type="gene designation" value="RNS3"/>
</dbReference>
<dbReference type="eggNOG" id="KOG1642">
    <property type="taxonomic scope" value="Eukaryota"/>
</dbReference>
<dbReference type="HOGENOM" id="CLU_069912_2_1_1"/>
<dbReference type="InParanoid" id="P42815"/>
<dbReference type="OMA" id="MKFWTHE"/>
<dbReference type="PhylomeDB" id="P42815"/>
<dbReference type="PRO" id="PR:P42815"/>
<dbReference type="Proteomes" id="UP000006548">
    <property type="component" value="Chromosome 1"/>
</dbReference>
<dbReference type="ExpressionAtlas" id="P42815">
    <property type="expression patterns" value="baseline and differential"/>
</dbReference>
<dbReference type="GO" id="GO:0033897">
    <property type="term" value="F:ribonuclease T2 activity"/>
    <property type="evidence" value="ECO:0007669"/>
    <property type="project" value="UniProtKB-EC"/>
</dbReference>
<dbReference type="GO" id="GO:0003723">
    <property type="term" value="F:RNA binding"/>
    <property type="evidence" value="ECO:0007669"/>
    <property type="project" value="InterPro"/>
</dbReference>
<dbReference type="CDD" id="cd01061">
    <property type="entry name" value="RNase_T2_euk"/>
    <property type="match status" value="1"/>
</dbReference>
<dbReference type="FunFam" id="3.90.730.10:FF:000003">
    <property type="entry name" value="Ribonuclease 3"/>
    <property type="match status" value="1"/>
</dbReference>
<dbReference type="Gene3D" id="3.90.730.10">
    <property type="entry name" value="Ribonuclease T2-like"/>
    <property type="match status" value="1"/>
</dbReference>
<dbReference type="InterPro" id="IPR033697">
    <property type="entry name" value="Ribonuclease_T2_eukaryotic"/>
</dbReference>
<dbReference type="InterPro" id="IPR001568">
    <property type="entry name" value="RNase_T2-like"/>
</dbReference>
<dbReference type="InterPro" id="IPR036430">
    <property type="entry name" value="RNase_T2-like_sf"/>
</dbReference>
<dbReference type="InterPro" id="IPR018188">
    <property type="entry name" value="RNase_T2_His_AS_1"/>
</dbReference>
<dbReference type="InterPro" id="IPR033130">
    <property type="entry name" value="RNase_T2_His_AS_2"/>
</dbReference>
<dbReference type="PANTHER" id="PTHR11240:SF75">
    <property type="entry name" value="RIBONUCLEASE 3"/>
    <property type="match status" value="1"/>
</dbReference>
<dbReference type="PANTHER" id="PTHR11240">
    <property type="entry name" value="RIBONUCLEASE T2"/>
    <property type="match status" value="1"/>
</dbReference>
<dbReference type="Pfam" id="PF00445">
    <property type="entry name" value="Ribonuclease_T2"/>
    <property type="match status" value="1"/>
</dbReference>
<dbReference type="SUPFAM" id="SSF55895">
    <property type="entry name" value="Ribonuclease Rh-like"/>
    <property type="match status" value="1"/>
</dbReference>
<dbReference type="PROSITE" id="PS00530">
    <property type="entry name" value="RNASE_T2_1"/>
    <property type="match status" value="1"/>
</dbReference>
<dbReference type="PROSITE" id="PS00531">
    <property type="entry name" value="RNASE_T2_2"/>
    <property type="match status" value="1"/>
</dbReference>
<name>RNS3_ARATH</name>